<sequence>MVAPAPLVLSLGDPAGIGPDITLTAWAQRRELGLPAFLVAGDPEALKARVRQLGLTVPLAETGPEDAAGHFAEALPVMPAGPASTALPGAPDASSAPCVVASLEAALGLVQAGRAAALVTNPLAKSVMYAGGFPFPGHTEFLAARAARPGRPAPHPVMMIWSEQLAVVPATIHLPYADVPGHLTIDLLVETGRIVAGDMARRFGLAHPRLVFCGLNPHAGEEGTLGTEDEAIVRPAVEALKREGIDARGPLPADTLFHPQARAGYDVAVGMYHDQVLIPAKTLAFHDGVNVTLGLPFIRTSPDHGTAFDIAGTGRANPSSLVAALRLARRLADAEARLAAREGHRAASVA</sequence>
<evidence type="ECO:0000255" key="1">
    <source>
        <dbReference type="HAMAP-Rule" id="MF_00536"/>
    </source>
</evidence>
<protein>
    <recommendedName>
        <fullName evidence="1">4-hydroxythreonine-4-phosphate dehydrogenase</fullName>
        <ecNumber evidence="1">1.1.1.262</ecNumber>
    </recommendedName>
    <alternativeName>
        <fullName evidence="1">4-(phosphohydroxy)-L-threonine dehydrogenase</fullName>
    </alternativeName>
</protein>
<accession>A7IJ81</accession>
<comment type="function">
    <text evidence="1">Catalyzes the NAD(P)-dependent oxidation of 4-(phosphooxy)-L-threonine (HTP) into 2-amino-3-oxo-4-(phosphooxy)butyric acid which spontaneously decarboxylates to form 3-amino-2-oxopropyl phosphate (AHAP).</text>
</comment>
<comment type="catalytic activity">
    <reaction evidence="1">
        <text>4-(phosphooxy)-L-threonine + NAD(+) = 3-amino-2-oxopropyl phosphate + CO2 + NADH</text>
        <dbReference type="Rhea" id="RHEA:32275"/>
        <dbReference type="ChEBI" id="CHEBI:16526"/>
        <dbReference type="ChEBI" id="CHEBI:57279"/>
        <dbReference type="ChEBI" id="CHEBI:57540"/>
        <dbReference type="ChEBI" id="CHEBI:57945"/>
        <dbReference type="ChEBI" id="CHEBI:58452"/>
        <dbReference type="EC" id="1.1.1.262"/>
    </reaction>
</comment>
<comment type="cofactor">
    <cofactor evidence="1">
        <name>Zn(2+)</name>
        <dbReference type="ChEBI" id="CHEBI:29105"/>
    </cofactor>
    <cofactor evidence="1">
        <name>Mg(2+)</name>
        <dbReference type="ChEBI" id="CHEBI:18420"/>
    </cofactor>
    <cofactor evidence="1">
        <name>Co(2+)</name>
        <dbReference type="ChEBI" id="CHEBI:48828"/>
    </cofactor>
    <text evidence="1">Binds 1 divalent metal cation per subunit. Can use ions such as Zn(2+), Mg(2+) or Co(2+).</text>
</comment>
<comment type="pathway">
    <text evidence="1">Cofactor biosynthesis; pyridoxine 5'-phosphate biosynthesis; pyridoxine 5'-phosphate from D-erythrose 4-phosphate: step 4/5.</text>
</comment>
<comment type="subunit">
    <text evidence="1">Homodimer.</text>
</comment>
<comment type="subcellular location">
    <subcellularLocation>
        <location evidence="1">Cytoplasm</location>
    </subcellularLocation>
</comment>
<comment type="miscellaneous">
    <text evidence="1">The active site is located at the dimer interface.</text>
</comment>
<comment type="similarity">
    <text evidence="1">Belongs to the PdxA family.</text>
</comment>
<feature type="chain" id="PRO_1000128267" description="4-hydroxythreonine-4-phosphate dehydrogenase">
    <location>
        <begin position="1"/>
        <end position="350"/>
    </location>
</feature>
<feature type="binding site" evidence="1">
    <location>
        <position position="138"/>
    </location>
    <ligand>
        <name>substrate</name>
    </ligand>
</feature>
<feature type="binding site" evidence="1">
    <location>
        <position position="139"/>
    </location>
    <ligand>
        <name>substrate</name>
    </ligand>
</feature>
<feature type="binding site" evidence="1">
    <location>
        <position position="173"/>
    </location>
    <ligand>
        <name>a divalent metal cation</name>
        <dbReference type="ChEBI" id="CHEBI:60240"/>
        <note>ligand shared between dimeric partners</note>
    </ligand>
</feature>
<feature type="binding site" evidence="1">
    <location>
        <position position="218"/>
    </location>
    <ligand>
        <name>a divalent metal cation</name>
        <dbReference type="ChEBI" id="CHEBI:60240"/>
        <note>ligand shared between dimeric partners</note>
    </ligand>
</feature>
<feature type="binding site" evidence="1">
    <location>
        <position position="273"/>
    </location>
    <ligand>
        <name>a divalent metal cation</name>
        <dbReference type="ChEBI" id="CHEBI:60240"/>
        <note>ligand shared between dimeric partners</note>
    </ligand>
</feature>
<feature type="binding site" evidence="1">
    <location>
        <position position="281"/>
    </location>
    <ligand>
        <name>substrate</name>
    </ligand>
</feature>
<feature type="binding site" evidence="1">
    <location>
        <position position="290"/>
    </location>
    <ligand>
        <name>substrate</name>
    </ligand>
</feature>
<feature type="binding site" evidence="1">
    <location>
        <position position="299"/>
    </location>
    <ligand>
        <name>substrate</name>
    </ligand>
</feature>
<organism>
    <name type="scientific">Xanthobacter autotrophicus (strain ATCC BAA-1158 / Py2)</name>
    <dbReference type="NCBI Taxonomy" id="78245"/>
    <lineage>
        <taxon>Bacteria</taxon>
        <taxon>Pseudomonadati</taxon>
        <taxon>Pseudomonadota</taxon>
        <taxon>Alphaproteobacteria</taxon>
        <taxon>Hyphomicrobiales</taxon>
        <taxon>Xanthobacteraceae</taxon>
        <taxon>Xanthobacter</taxon>
    </lineage>
</organism>
<reference key="1">
    <citation type="submission" date="2007-07" db="EMBL/GenBank/DDBJ databases">
        <title>Complete sequence of chromosome of Xanthobacter autotrophicus Py2.</title>
        <authorList>
            <consortium name="US DOE Joint Genome Institute"/>
            <person name="Copeland A."/>
            <person name="Lucas S."/>
            <person name="Lapidus A."/>
            <person name="Barry K."/>
            <person name="Glavina del Rio T."/>
            <person name="Hammon N."/>
            <person name="Israni S."/>
            <person name="Dalin E."/>
            <person name="Tice H."/>
            <person name="Pitluck S."/>
            <person name="Sims D."/>
            <person name="Brettin T."/>
            <person name="Bruce D."/>
            <person name="Detter J.C."/>
            <person name="Han C."/>
            <person name="Tapia R."/>
            <person name="Brainard J."/>
            <person name="Schmutz J."/>
            <person name="Larimer F."/>
            <person name="Land M."/>
            <person name="Hauser L."/>
            <person name="Kyrpides N."/>
            <person name="Kim E."/>
            <person name="Ensigns S.A."/>
            <person name="Richardson P."/>
        </authorList>
    </citation>
    <scope>NUCLEOTIDE SEQUENCE [LARGE SCALE GENOMIC DNA]</scope>
    <source>
        <strain>ATCC BAA-1158 / Py2</strain>
    </source>
</reference>
<gene>
    <name evidence="1" type="primary">pdxA</name>
    <name type="ordered locus">Xaut_2834</name>
</gene>
<proteinExistence type="inferred from homology"/>
<dbReference type="EC" id="1.1.1.262" evidence="1"/>
<dbReference type="EMBL" id="CP000781">
    <property type="protein sequence ID" value="ABS68074.1"/>
    <property type="molecule type" value="Genomic_DNA"/>
</dbReference>
<dbReference type="SMR" id="A7IJ81"/>
<dbReference type="STRING" id="78245.Xaut_2834"/>
<dbReference type="KEGG" id="xau:Xaut_2834"/>
<dbReference type="eggNOG" id="COG1995">
    <property type="taxonomic scope" value="Bacteria"/>
</dbReference>
<dbReference type="HOGENOM" id="CLU_040168_1_0_5"/>
<dbReference type="OrthoDB" id="9801783at2"/>
<dbReference type="PhylomeDB" id="A7IJ81"/>
<dbReference type="UniPathway" id="UPA00244">
    <property type="reaction ID" value="UER00312"/>
</dbReference>
<dbReference type="Proteomes" id="UP000002417">
    <property type="component" value="Chromosome"/>
</dbReference>
<dbReference type="GO" id="GO:0005737">
    <property type="term" value="C:cytoplasm"/>
    <property type="evidence" value="ECO:0007669"/>
    <property type="project" value="UniProtKB-SubCell"/>
</dbReference>
<dbReference type="GO" id="GO:0050570">
    <property type="term" value="F:4-hydroxythreonine-4-phosphate dehydrogenase activity"/>
    <property type="evidence" value="ECO:0007669"/>
    <property type="project" value="UniProtKB-UniRule"/>
</dbReference>
<dbReference type="GO" id="GO:0050897">
    <property type="term" value="F:cobalt ion binding"/>
    <property type="evidence" value="ECO:0007669"/>
    <property type="project" value="UniProtKB-UniRule"/>
</dbReference>
<dbReference type="GO" id="GO:0000287">
    <property type="term" value="F:magnesium ion binding"/>
    <property type="evidence" value="ECO:0007669"/>
    <property type="project" value="UniProtKB-UniRule"/>
</dbReference>
<dbReference type="GO" id="GO:0051287">
    <property type="term" value="F:NAD binding"/>
    <property type="evidence" value="ECO:0007669"/>
    <property type="project" value="InterPro"/>
</dbReference>
<dbReference type="GO" id="GO:0008270">
    <property type="term" value="F:zinc ion binding"/>
    <property type="evidence" value="ECO:0007669"/>
    <property type="project" value="UniProtKB-UniRule"/>
</dbReference>
<dbReference type="GO" id="GO:0042823">
    <property type="term" value="P:pyridoxal phosphate biosynthetic process"/>
    <property type="evidence" value="ECO:0007669"/>
    <property type="project" value="UniProtKB-UniRule"/>
</dbReference>
<dbReference type="GO" id="GO:0008615">
    <property type="term" value="P:pyridoxine biosynthetic process"/>
    <property type="evidence" value="ECO:0007669"/>
    <property type="project" value="UniProtKB-UniRule"/>
</dbReference>
<dbReference type="Gene3D" id="3.40.718.10">
    <property type="entry name" value="Isopropylmalate Dehydrogenase"/>
    <property type="match status" value="1"/>
</dbReference>
<dbReference type="HAMAP" id="MF_00536">
    <property type="entry name" value="PdxA"/>
    <property type="match status" value="1"/>
</dbReference>
<dbReference type="InterPro" id="IPR037510">
    <property type="entry name" value="PdxA"/>
</dbReference>
<dbReference type="InterPro" id="IPR005255">
    <property type="entry name" value="PdxA_fam"/>
</dbReference>
<dbReference type="NCBIfam" id="TIGR00557">
    <property type="entry name" value="pdxA"/>
    <property type="match status" value="1"/>
</dbReference>
<dbReference type="NCBIfam" id="NF003699">
    <property type="entry name" value="PRK05312.1"/>
    <property type="match status" value="1"/>
</dbReference>
<dbReference type="PANTHER" id="PTHR30004">
    <property type="entry name" value="4-HYDROXYTHREONINE-4-PHOSPHATE DEHYDROGENASE"/>
    <property type="match status" value="1"/>
</dbReference>
<dbReference type="PANTHER" id="PTHR30004:SF6">
    <property type="entry name" value="D-THREONATE 4-PHOSPHATE DEHYDROGENASE"/>
    <property type="match status" value="1"/>
</dbReference>
<dbReference type="Pfam" id="PF04166">
    <property type="entry name" value="PdxA"/>
    <property type="match status" value="1"/>
</dbReference>
<dbReference type="SUPFAM" id="SSF53659">
    <property type="entry name" value="Isocitrate/Isopropylmalate dehydrogenase-like"/>
    <property type="match status" value="1"/>
</dbReference>
<keyword id="KW-0170">Cobalt</keyword>
<keyword id="KW-0963">Cytoplasm</keyword>
<keyword id="KW-0460">Magnesium</keyword>
<keyword id="KW-0479">Metal-binding</keyword>
<keyword id="KW-0520">NAD</keyword>
<keyword id="KW-0521">NADP</keyword>
<keyword id="KW-0560">Oxidoreductase</keyword>
<keyword id="KW-0664">Pyridoxine biosynthesis</keyword>
<keyword id="KW-1185">Reference proteome</keyword>
<keyword id="KW-0862">Zinc</keyword>
<name>PDXA_XANP2</name>